<evidence type="ECO:0000305" key="1"/>
<gene>
    <name type="ordered locus">SAUSA300_1291</name>
</gene>
<protein>
    <recommendedName>
        <fullName>Uncharacterized hydrolase SAUSA300_1291</fullName>
        <ecNumber>3.-.-.-</ecNumber>
    </recommendedName>
</protein>
<proteinExistence type="inferred from homology"/>
<keyword id="KW-0378">Hydrolase</keyword>
<dbReference type="EC" id="3.-.-.-"/>
<dbReference type="EMBL" id="CP000255">
    <property type="protein sequence ID" value="ABD21961.1"/>
    <property type="molecule type" value="Genomic_DNA"/>
</dbReference>
<dbReference type="RefSeq" id="WP_001003793.1">
    <property type="nucleotide sequence ID" value="NZ_CP027476.1"/>
</dbReference>
<dbReference type="SMR" id="Q2FH40"/>
<dbReference type="KEGG" id="saa:SAUSA300_1291"/>
<dbReference type="HOGENOM" id="CLU_023257_1_0_9"/>
<dbReference type="OMA" id="TYWVRLA"/>
<dbReference type="Proteomes" id="UP000001939">
    <property type="component" value="Chromosome"/>
</dbReference>
<dbReference type="GO" id="GO:0016787">
    <property type="term" value="F:hydrolase activity"/>
    <property type="evidence" value="ECO:0007669"/>
    <property type="project" value="UniProtKB-KW"/>
</dbReference>
<dbReference type="FunFam" id="3.30.70.360:FF:000022">
    <property type="entry name" value="Hippurate hydrolase"/>
    <property type="match status" value="1"/>
</dbReference>
<dbReference type="Gene3D" id="3.30.70.360">
    <property type="match status" value="1"/>
</dbReference>
<dbReference type="Gene3D" id="3.40.630.10">
    <property type="entry name" value="Zn peptidases"/>
    <property type="match status" value="1"/>
</dbReference>
<dbReference type="InterPro" id="IPR017439">
    <property type="entry name" value="Amidohydrolase"/>
</dbReference>
<dbReference type="InterPro" id="IPR036264">
    <property type="entry name" value="Bact_exopeptidase_dim_dom"/>
</dbReference>
<dbReference type="InterPro" id="IPR002933">
    <property type="entry name" value="Peptidase_M20"/>
</dbReference>
<dbReference type="InterPro" id="IPR011650">
    <property type="entry name" value="Peptidase_M20_dimer"/>
</dbReference>
<dbReference type="NCBIfam" id="TIGR01891">
    <property type="entry name" value="amidohydrolases"/>
    <property type="match status" value="1"/>
</dbReference>
<dbReference type="PANTHER" id="PTHR11014:SF63">
    <property type="entry name" value="METALLOPEPTIDASE, PUTATIVE (AFU_ORTHOLOGUE AFUA_6G09600)-RELATED"/>
    <property type="match status" value="1"/>
</dbReference>
<dbReference type="PANTHER" id="PTHR11014">
    <property type="entry name" value="PEPTIDASE M20 FAMILY MEMBER"/>
    <property type="match status" value="1"/>
</dbReference>
<dbReference type="Pfam" id="PF07687">
    <property type="entry name" value="M20_dimer"/>
    <property type="match status" value="1"/>
</dbReference>
<dbReference type="Pfam" id="PF01546">
    <property type="entry name" value="Peptidase_M20"/>
    <property type="match status" value="1"/>
</dbReference>
<dbReference type="PIRSF" id="PIRSF005962">
    <property type="entry name" value="Pept_M20D_amidohydro"/>
    <property type="match status" value="1"/>
</dbReference>
<dbReference type="SUPFAM" id="SSF55031">
    <property type="entry name" value="Bacterial exopeptidase dimerisation domain"/>
    <property type="match status" value="1"/>
</dbReference>
<dbReference type="SUPFAM" id="SSF53187">
    <property type="entry name" value="Zn-dependent exopeptidases"/>
    <property type="match status" value="1"/>
</dbReference>
<sequence length="383" mass="43144">MNELEFVTKHRRHLHQHPELSLHEFETTAYIKAFLDSLNIKYDCPLETGVIAYLEGNGSHTIAYRADIDALPILEENDVPYRSQSDHVMHACGHDGHTTALMLFVQRCKDMQDAGQLPQNVVFIFQPAEETGGGANRLIKAGAFDKYPIEAVFGIHVNPFADEGIAVIRDEEITASATEYRFFLTGLSSHVADKEQGHSCGEALQHVLTQISQIQQFHLNGLKRNIVHIGHFKAGEAINTVPSNGYLEGTIRTYDIDDLTIVKNQMHKIAESVKLLFNVDCEVKFAEGYPPTINSPKLRTQIEDALIKADLNVYDKPTPFLFGEDFSFYGQQLAPAYFVFIGTRNEDKGFVTGLHTSHLNFDEKVLINVVNFYENLLNNYKEV</sequence>
<name>Y1291_STAA3</name>
<comment type="similarity">
    <text evidence="1">Belongs to the peptidase M20 family.</text>
</comment>
<feature type="chain" id="PRO_0000298626" description="Uncharacterized hydrolase SAUSA300_1291">
    <location>
        <begin position="1"/>
        <end position="383"/>
    </location>
</feature>
<organism>
    <name type="scientific">Staphylococcus aureus (strain USA300)</name>
    <dbReference type="NCBI Taxonomy" id="367830"/>
    <lineage>
        <taxon>Bacteria</taxon>
        <taxon>Bacillati</taxon>
        <taxon>Bacillota</taxon>
        <taxon>Bacilli</taxon>
        <taxon>Bacillales</taxon>
        <taxon>Staphylococcaceae</taxon>
        <taxon>Staphylococcus</taxon>
    </lineage>
</organism>
<reference key="1">
    <citation type="journal article" date="2006" name="Lancet">
        <title>Complete genome sequence of USA300, an epidemic clone of community-acquired meticillin-resistant Staphylococcus aureus.</title>
        <authorList>
            <person name="Diep B.A."/>
            <person name="Gill S.R."/>
            <person name="Chang R.F."/>
            <person name="Phan T.H."/>
            <person name="Chen J.H."/>
            <person name="Davidson M.G."/>
            <person name="Lin F."/>
            <person name="Lin J."/>
            <person name="Carleton H.A."/>
            <person name="Mongodin E.F."/>
            <person name="Sensabaugh G.F."/>
            <person name="Perdreau-Remington F."/>
        </authorList>
    </citation>
    <scope>NUCLEOTIDE SEQUENCE [LARGE SCALE GENOMIC DNA]</scope>
    <source>
        <strain>USA300</strain>
    </source>
</reference>
<accession>Q2FH40</accession>